<name>MFAP2_MOUSE</name>
<evidence type="ECO:0000250" key="1"/>
<evidence type="ECO:0000250" key="2">
    <source>
        <dbReference type="UniProtKB" id="P27424"/>
    </source>
</evidence>
<evidence type="ECO:0000255" key="3"/>
<evidence type="ECO:0000255" key="4">
    <source>
        <dbReference type="PROSITE-ProRule" id="PRU01005"/>
    </source>
</evidence>
<evidence type="ECO:0000256" key="5">
    <source>
        <dbReference type="SAM" id="MobiDB-lite"/>
    </source>
</evidence>
<evidence type="ECO:0000305" key="6"/>
<proteinExistence type="evidence at transcript level"/>
<gene>
    <name type="primary">Mfap2</name>
    <name type="synonym">Magp</name>
    <name type="synonym">Magp1</name>
</gene>
<organism>
    <name type="scientific">Mus musculus</name>
    <name type="common">Mouse</name>
    <dbReference type="NCBI Taxonomy" id="10090"/>
    <lineage>
        <taxon>Eukaryota</taxon>
        <taxon>Metazoa</taxon>
        <taxon>Chordata</taxon>
        <taxon>Craniata</taxon>
        <taxon>Vertebrata</taxon>
        <taxon>Euteleostomi</taxon>
        <taxon>Mammalia</taxon>
        <taxon>Eutheria</taxon>
        <taxon>Euarchontoglires</taxon>
        <taxon>Glires</taxon>
        <taxon>Rodentia</taxon>
        <taxon>Myomorpha</taxon>
        <taxon>Muroidea</taxon>
        <taxon>Muridae</taxon>
        <taxon>Murinae</taxon>
        <taxon>Mus</taxon>
        <taxon>Mus</taxon>
    </lineage>
</organism>
<reference key="1">
    <citation type="journal article" date="1993" name="J. Biol. Chem.">
        <title>Structure, chromosomal localization, and expression pattern of the murine Magp gene.</title>
        <authorList>
            <person name="Chen Y."/>
            <person name="Faraco J."/>
            <person name="Yin W."/>
            <person name="Germiller J."/>
            <person name="Francke U."/>
            <person name="Bonadio J."/>
        </authorList>
    </citation>
    <scope>NUCLEOTIDE SEQUENCE [MRNA]</scope>
    <source>
        <strain>CD-1</strain>
    </source>
</reference>
<reference key="2">
    <citation type="journal article" date="2004" name="Genome Res.">
        <title>The status, quality, and expansion of the NIH full-length cDNA project: the Mammalian Gene Collection (MGC).</title>
        <authorList>
            <consortium name="The MGC Project Team"/>
        </authorList>
    </citation>
    <scope>NUCLEOTIDE SEQUENCE [LARGE SCALE MRNA]</scope>
    <source>
        <strain>C57BL/6J</strain>
        <tissue>Mammary gland</tissue>
    </source>
</reference>
<dbReference type="EMBL" id="L23769">
    <property type="protein sequence ID" value="AAA16448.1"/>
    <property type="molecule type" value="mRNA"/>
</dbReference>
<dbReference type="EMBL" id="BC035490">
    <property type="protein sequence ID" value="AAH35490.1"/>
    <property type="molecule type" value="mRNA"/>
</dbReference>
<dbReference type="CCDS" id="CCDS18860.2"/>
<dbReference type="PIR" id="A49313">
    <property type="entry name" value="A49313"/>
</dbReference>
<dbReference type="RefSeq" id="NP_001155271.2">
    <property type="nucleotide sequence ID" value="NM_001161799.3"/>
</dbReference>
<dbReference type="RefSeq" id="NP_001408172.2">
    <property type="nucleotide sequence ID" value="NM_001421243.2"/>
</dbReference>
<dbReference type="RefSeq" id="NP_032572.3">
    <property type="nucleotide sequence ID" value="NM_008546.5"/>
</dbReference>
<dbReference type="FunCoup" id="P55002">
    <property type="interactions" value="76"/>
</dbReference>
<dbReference type="STRING" id="10090.ENSMUSP00000071868"/>
<dbReference type="GlyGen" id="P55002">
    <property type="glycosylation" value="1 site"/>
</dbReference>
<dbReference type="iPTMnet" id="P55002"/>
<dbReference type="PhosphoSitePlus" id="P55002"/>
<dbReference type="PaxDb" id="10090-ENSMUSP00000071868"/>
<dbReference type="PeptideAtlas" id="P55002"/>
<dbReference type="ProteomicsDB" id="292226"/>
<dbReference type="DNASU" id="17150"/>
<dbReference type="Ensembl" id="ENSMUST00000071977.10">
    <property type="protein sequence ID" value="ENSMUSP00000071868.10"/>
    <property type="gene ID" value="ENSMUSG00000060572.18"/>
</dbReference>
<dbReference type="Ensembl" id="ENSMUST00000166376.10">
    <property type="protein sequence ID" value="ENSMUSP00000132711.4"/>
    <property type="gene ID" value="ENSMUSG00000060572.18"/>
</dbReference>
<dbReference type="GeneID" id="17150"/>
<dbReference type="KEGG" id="mmu:17150"/>
<dbReference type="AGR" id="MGI:99559"/>
<dbReference type="CTD" id="4237"/>
<dbReference type="MGI" id="MGI:99559">
    <property type="gene designation" value="Mfap2"/>
</dbReference>
<dbReference type="eggNOG" id="ENOG502RXC2">
    <property type="taxonomic scope" value="Eukaryota"/>
</dbReference>
<dbReference type="InParanoid" id="P55002"/>
<dbReference type="OrthoDB" id="9947781at2759"/>
<dbReference type="Reactome" id="R-MMU-1566948">
    <property type="pathway name" value="Elastic fibre formation"/>
</dbReference>
<dbReference type="Reactome" id="R-MMU-2129379">
    <property type="pathway name" value="Molecules associated with elastic fibres"/>
</dbReference>
<dbReference type="ChiTaRS" id="Mfap2">
    <property type="organism name" value="mouse"/>
</dbReference>
<dbReference type="PRO" id="PR:P55002"/>
<dbReference type="Proteomes" id="UP000000589">
    <property type="component" value="Chromosome 4"/>
</dbReference>
<dbReference type="RNAct" id="P55002">
    <property type="molecule type" value="protein"/>
</dbReference>
<dbReference type="GO" id="GO:0062023">
    <property type="term" value="C:collagen-containing extracellular matrix"/>
    <property type="evidence" value="ECO:0007005"/>
    <property type="project" value="BHF-UCL"/>
</dbReference>
<dbReference type="GO" id="GO:0005576">
    <property type="term" value="C:extracellular region"/>
    <property type="evidence" value="ECO:0007669"/>
    <property type="project" value="UniProtKB-KW"/>
</dbReference>
<dbReference type="GO" id="GO:0001527">
    <property type="term" value="C:microfibril"/>
    <property type="evidence" value="ECO:0000314"/>
    <property type="project" value="MGI"/>
</dbReference>
<dbReference type="GO" id="GO:0070051">
    <property type="term" value="F:fibrinogen binding"/>
    <property type="evidence" value="ECO:0000314"/>
    <property type="project" value="MGI"/>
</dbReference>
<dbReference type="GO" id="GO:0001968">
    <property type="term" value="F:fibronectin binding"/>
    <property type="evidence" value="ECO:0000353"/>
    <property type="project" value="MGI"/>
</dbReference>
<dbReference type="GO" id="GO:0048048">
    <property type="term" value="P:embryonic eye morphogenesis"/>
    <property type="evidence" value="ECO:0007669"/>
    <property type="project" value="Ensembl"/>
</dbReference>
<dbReference type="GO" id="GO:0030220">
    <property type="term" value="P:platelet formation"/>
    <property type="evidence" value="ECO:0000315"/>
    <property type="project" value="MGI"/>
</dbReference>
<dbReference type="GO" id="GO:0120162">
    <property type="term" value="P:positive regulation of cold-induced thermogenesis"/>
    <property type="evidence" value="ECO:0000315"/>
    <property type="project" value="YuBioLab"/>
</dbReference>
<dbReference type="GO" id="GO:0048050">
    <property type="term" value="P:post-embryonic eye morphogenesis"/>
    <property type="evidence" value="ECO:0007669"/>
    <property type="project" value="Ensembl"/>
</dbReference>
<dbReference type="InterPro" id="IPR008673">
    <property type="entry name" value="MAGP"/>
</dbReference>
<dbReference type="InterPro" id="IPR003582">
    <property type="entry name" value="ShKT_dom"/>
</dbReference>
<dbReference type="PANTHER" id="PTHR16485">
    <property type="entry name" value="MICROFIBRILLAR-ASSOCIATED PROTEIN 2"/>
    <property type="match status" value="1"/>
</dbReference>
<dbReference type="PANTHER" id="PTHR16485:SF3">
    <property type="entry name" value="MICROFIBRILLAR-ASSOCIATED PROTEIN 2"/>
    <property type="match status" value="1"/>
</dbReference>
<dbReference type="Pfam" id="PF05507">
    <property type="entry name" value="MAGP"/>
    <property type="match status" value="1"/>
</dbReference>
<dbReference type="PROSITE" id="PS51670">
    <property type="entry name" value="SHKT"/>
    <property type="match status" value="1"/>
</dbReference>
<keyword id="KW-1015">Disulfide bond</keyword>
<keyword id="KW-0272">Extracellular matrix</keyword>
<keyword id="KW-0325">Glycoprotein</keyword>
<keyword id="KW-0873">Pyrrolidone carboxylic acid</keyword>
<keyword id="KW-1185">Reference proteome</keyword>
<keyword id="KW-0964">Secreted</keyword>
<keyword id="KW-0732">Signal</keyword>
<keyword id="KW-0765">Sulfation</keyword>
<protein>
    <recommendedName>
        <fullName>Microfibrillar-associated protein 2</fullName>
        <shortName>MFAP-2</shortName>
    </recommendedName>
    <alternativeName>
        <fullName>Microfibril-associated glycoprotein 1</fullName>
        <shortName>MAGP</shortName>
        <shortName>MAGP-1</shortName>
    </alternativeName>
</protein>
<comment type="function">
    <text>Component of the elastin-associated microfibrils.</text>
</comment>
<comment type="subunit">
    <text evidence="2">Forms a ternary complex with BGN and ELN. Interacts with FBN1 (via N-terminal domain) and FBN2.</text>
</comment>
<comment type="subcellular location">
    <subcellularLocation>
        <location>Secreted</location>
        <location>Extracellular space</location>
        <location>Extracellular matrix</location>
    </subcellularLocation>
</comment>
<comment type="PTM">
    <text>Forms intermolecular disulfide bonds either with other MAGP-1 molecules or with other components of the microfibrils. May form transglutaminase cross-links.</text>
</comment>
<comment type="PTM">
    <text evidence="1">O-glycosylated.</text>
</comment>
<comment type="similarity">
    <text evidence="6">Belongs to the MFAP family.</text>
</comment>
<feature type="signal peptide" description="Or 18" evidence="3">
    <location>
        <begin position="1"/>
        <end position="16"/>
    </location>
</feature>
<feature type="chain" id="PRO_0000018683" description="Microfibrillar-associated protein 2">
    <location>
        <begin position="17"/>
        <end position="183"/>
    </location>
</feature>
<feature type="domain" description="ShKT" evidence="4">
    <location>
        <begin position="153"/>
        <end position="183"/>
    </location>
</feature>
<feature type="region of interest" description="Disordered" evidence="5">
    <location>
        <begin position="52"/>
        <end position="92"/>
    </location>
</feature>
<feature type="compositionally biased region" description="Low complexity" evidence="5">
    <location>
        <begin position="59"/>
        <end position="70"/>
    </location>
</feature>
<feature type="modified residue" description="Pyrrolidone carboxylic acid" evidence="2">
    <location>
        <position position="17"/>
    </location>
</feature>
<feature type="modified residue" description="Sulfotyrosine" evidence="2">
    <location>
        <position position="46"/>
    </location>
</feature>
<feature type="modified residue" description="Sulfotyrosine" evidence="2">
    <location>
        <position position="47"/>
    </location>
</feature>
<feature type="modified residue" description="Sulfotyrosine" evidence="2">
    <location>
        <position position="49"/>
    </location>
</feature>
<feature type="disulfide bond" evidence="4">
    <location>
        <begin position="153"/>
        <end position="183"/>
    </location>
</feature>
<feature type="disulfide bond" evidence="4">
    <location>
        <begin position="160"/>
        <end position="176"/>
    </location>
</feature>
<feature type="disulfide bond" evidence="4">
    <location>
        <begin position="169"/>
        <end position="180"/>
    </location>
</feature>
<accession>P55002</accession>
<sequence>MRAACLFLLFMPGLLAQGQYDLDPLPPFPDHVQYNHYGDQIDNADYYDYQEVSPRTPEEQFQSQQQVQQEVIPAPTPEPAAAGDLETEPTEPGPLDCREEQYPCTRLYSIHKPCKQCLNEVCFYSLRRVYVVNKEICVRTVCAHEELLRADLCRDKFSKCGVMAVSGLCQSVAASCARSCGGC</sequence>